<proteinExistence type="inferred from homology"/>
<name>DNLJ_BURTA</name>
<sequence>MARSPVEPSAGQPAKRAAWLRAELERANYAYYVLDQPDLPDAEYDRLFAELQQIEAEHPDLVTPDSPTQRVGGEVASGFTPVVHDTPMLSLNNGFSDDDVVAFDKRVADGLDKPTDLAGTVTEPVEYACELKFDGLAISLRYENGRFVQASTRGDGTTGEDVTENIRTVRSIPLTLKGKRVPRMLDVRGEVLMFRRDFARLNERQRAAGQREFANPRNAAAGSLRQLDSKITASRPLSFFAYGIGVLDGVEMPDTHSSLLDWYETLGLPVNRERAVVRGAAGLLEFFHSVGARRESLPYDIDGVVYKVNRRDEQDRLGFVSRAPRFALAHKFPAQEALTKLVAIDVQVGRTGAITPVARLEPVFVGGATVTNATLHNEDEVRRKDIRIGDTVIVRRAGDVIPEVVSAVFDRRPADAREFVMPTECPECGSRVERLPDEAIARCTGGLFCPAQRKQALWHFAQRRALDIDGLGEKIIDQLVEQNLVRTPADLFNLGFSTLVELDRFAEKSAQNLIDSLEKAKHTTLARFIYALGIRHVGESTAKDLAKHFGSLDPIMDASIDELLEVNDVGPIVAESIHQFFAEAHNRTVIEQLRAKGKVTWPEGPPAPRAPQGVLAGKTVVLTGTLPTLTREAAKEMLEAAGAKVAGSVSKKTDYVVAGADAGSKLAKAEELGIPVLDEAGMHKLLEGHAR</sequence>
<evidence type="ECO:0000255" key="1">
    <source>
        <dbReference type="HAMAP-Rule" id="MF_01588"/>
    </source>
</evidence>
<comment type="function">
    <text evidence="1">DNA ligase that catalyzes the formation of phosphodiester linkages between 5'-phosphoryl and 3'-hydroxyl groups in double-stranded DNA using NAD as a coenzyme and as the energy source for the reaction. It is essential for DNA replication and repair of damaged DNA.</text>
</comment>
<comment type="catalytic activity">
    <reaction evidence="1">
        <text>NAD(+) + (deoxyribonucleotide)n-3'-hydroxyl + 5'-phospho-(deoxyribonucleotide)m = (deoxyribonucleotide)n+m + AMP + beta-nicotinamide D-nucleotide.</text>
        <dbReference type="EC" id="6.5.1.2"/>
    </reaction>
</comment>
<comment type="cofactor">
    <cofactor evidence="1">
        <name>Mg(2+)</name>
        <dbReference type="ChEBI" id="CHEBI:18420"/>
    </cofactor>
    <cofactor evidence="1">
        <name>Mn(2+)</name>
        <dbReference type="ChEBI" id="CHEBI:29035"/>
    </cofactor>
</comment>
<comment type="similarity">
    <text evidence="1">Belongs to the NAD-dependent DNA ligase family. LigA subfamily.</text>
</comment>
<feature type="chain" id="PRO_0000313170" description="DNA ligase">
    <location>
        <begin position="1"/>
        <end position="691"/>
    </location>
</feature>
<feature type="domain" description="BRCT" evidence="1">
    <location>
        <begin position="610"/>
        <end position="691"/>
    </location>
</feature>
<feature type="active site" description="N6-AMP-lysine intermediate" evidence="1">
    <location>
        <position position="132"/>
    </location>
</feature>
<feature type="binding site" evidence="1">
    <location>
        <begin position="41"/>
        <end position="45"/>
    </location>
    <ligand>
        <name>NAD(+)</name>
        <dbReference type="ChEBI" id="CHEBI:57540"/>
    </ligand>
</feature>
<feature type="binding site" evidence="1">
    <location>
        <begin position="90"/>
        <end position="91"/>
    </location>
    <ligand>
        <name>NAD(+)</name>
        <dbReference type="ChEBI" id="CHEBI:57540"/>
    </ligand>
</feature>
<feature type="binding site" evidence="1">
    <location>
        <position position="130"/>
    </location>
    <ligand>
        <name>NAD(+)</name>
        <dbReference type="ChEBI" id="CHEBI:57540"/>
    </ligand>
</feature>
<feature type="binding site" evidence="1">
    <location>
        <position position="153"/>
    </location>
    <ligand>
        <name>NAD(+)</name>
        <dbReference type="ChEBI" id="CHEBI:57540"/>
    </ligand>
</feature>
<feature type="binding site" evidence="1">
    <location>
        <position position="190"/>
    </location>
    <ligand>
        <name>NAD(+)</name>
        <dbReference type="ChEBI" id="CHEBI:57540"/>
    </ligand>
</feature>
<feature type="binding site" evidence="1">
    <location>
        <position position="307"/>
    </location>
    <ligand>
        <name>NAD(+)</name>
        <dbReference type="ChEBI" id="CHEBI:57540"/>
    </ligand>
</feature>
<feature type="binding site" evidence="1">
    <location>
        <position position="331"/>
    </location>
    <ligand>
        <name>NAD(+)</name>
        <dbReference type="ChEBI" id="CHEBI:57540"/>
    </ligand>
</feature>
<feature type="binding site" evidence="1">
    <location>
        <position position="425"/>
    </location>
    <ligand>
        <name>Zn(2+)</name>
        <dbReference type="ChEBI" id="CHEBI:29105"/>
    </ligand>
</feature>
<feature type="binding site" evidence="1">
    <location>
        <position position="428"/>
    </location>
    <ligand>
        <name>Zn(2+)</name>
        <dbReference type="ChEBI" id="CHEBI:29105"/>
    </ligand>
</feature>
<feature type="binding site" evidence="1">
    <location>
        <position position="443"/>
    </location>
    <ligand>
        <name>Zn(2+)</name>
        <dbReference type="ChEBI" id="CHEBI:29105"/>
    </ligand>
</feature>
<feature type="binding site" evidence="1">
    <location>
        <position position="449"/>
    </location>
    <ligand>
        <name>Zn(2+)</name>
        <dbReference type="ChEBI" id="CHEBI:29105"/>
    </ligand>
</feature>
<organism>
    <name type="scientific">Burkholderia thailandensis (strain ATCC 700388 / DSM 13276 / CCUG 48851 / CIP 106301 / E264)</name>
    <dbReference type="NCBI Taxonomy" id="271848"/>
    <lineage>
        <taxon>Bacteria</taxon>
        <taxon>Pseudomonadati</taxon>
        <taxon>Pseudomonadota</taxon>
        <taxon>Betaproteobacteria</taxon>
        <taxon>Burkholderiales</taxon>
        <taxon>Burkholderiaceae</taxon>
        <taxon>Burkholderia</taxon>
        <taxon>pseudomallei group</taxon>
    </lineage>
</organism>
<protein>
    <recommendedName>
        <fullName evidence="1">DNA ligase</fullName>
        <ecNumber evidence="1">6.5.1.2</ecNumber>
    </recommendedName>
    <alternativeName>
        <fullName evidence="1">Polydeoxyribonucleotide synthase [NAD(+)]</fullName>
    </alternativeName>
</protein>
<reference key="1">
    <citation type="journal article" date="2005" name="BMC Genomics">
        <title>Bacterial genome adaptation to niches: divergence of the potential virulence genes in three Burkholderia species of different survival strategies.</title>
        <authorList>
            <person name="Kim H.S."/>
            <person name="Schell M.A."/>
            <person name="Yu Y."/>
            <person name="Ulrich R.L."/>
            <person name="Sarria S.H."/>
            <person name="Nierman W.C."/>
            <person name="DeShazer D."/>
        </authorList>
    </citation>
    <scope>NUCLEOTIDE SEQUENCE [LARGE SCALE GENOMIC DNA]</scope>
    <source>
        <strain>ATCC 700388 / DSM 13276 / CCUG 48851 / CIP 106301 / E264</strain>
    </source>
</reference>
<keyword id="KW-0227">DNA damage</keyword>
<keyword id="KW-0234">DNA repair</keyword>
<keyword id="KW-0235">DNA replication</keyword>
<keyword id="KW-0436">Ligase</keyword>
<keyword id="KW-0460">Magnesium</keyword>
<keyword id="KW-0464">Manganese</keyword>
<keyword id="KW-0479">Metal-binding</keyword>
<keyword id="KW-0520">NAD</keyword>
<keyword id="KW-0862">Zinc</keyword>
<accession>Q2SX03</accession>
<dbReference type="EC" id="6.5.1.2" evidence="1"/>
<dbReference type="EMBL" id="CP000086">
    <property type="protein sequence ID" value="ABC37898.1"/>
    <property type="molecule type" value="Genomic_DNA"/>
</dbReference>
<dbReference type="RefSeq" id="WP_009890429.1">
    <property type="nucleotide sequence ID" value="NC_007651.1"/>
</dbReference>
<dbReference type="SMR" id="Q2SX03"/>
<dbReference type="GeneID" id="45121751"/>
<dbReference type="KEGG" id="bte:BTH_I2022"/>
<dbReference type="HOGENOM" id="CLU_007764_2_1_4"/>
<dbReference type="Proteomes" id="UP000001930">
    <property type="component" value="Chromosome I"/>
</dbReference>
<dbReference type="GO" id="GO:0005829">
    <property type="term" value="C:cytosol"/>
    <property type="evidence" value="ECO:0007669"/>
    <property type="project" value="TreeGrafter"/>
</dbReference>
<dbReference type="GO" id="GO:0003677">
    <property type="term" value="F:DNA binding"/>
    <property type="evidence" value="ECO:0007669"/>
    <property type="project" value="InterPro"/>
</dbReference>
<dbReference type="GO" id="GO:0003911">
    <property type="term" value="F:DNA ligase (NAD+) activity"/>
    <property type="evidence" value="ECO:0007669"/>
    <property type="project" value="UniProtKB-UniRule"/>
</dbReference>
<dbReference type="GO" id="GO:0046872">
    <property type="term" value="F:metal ion binding"/>
    <property type="evidence" value="ECO:0007669"/>
    <property type="project" value="UniProtKB-KW"/>
</dbReference>
<dbReference type="GO" id="GO:0006281">
    <property type="term" value="P:DNA repair"/>
    <property type="evidence" value="ECO:0007669"/>
    <property type="project" value="UniProtKB-KW"/>
</dbReference>
<dbReference type="GO" id="GO:0006260">
    <property type="term" value="P:DNA replication"/>
    <property type="evidence" value="ECO:0007669"/>
    <property type="project" value="UniProtKB-KW"/>
</dbReference>
<dbReference type="CDD" id="cd17748">
    <property type="entry name" value="BRCT_DNA_ligase_like"/>
    <property type="match status" value="1"/>
</dbReference>
<dbReference type="CDD" id="cd00114">
    <property type="entry name" value="LIGANc"/>
    <property type="match status" value="1"/>
</dbReference>
<dbReference type="FunFam" id="1.10.150.20:FF:000006">
    <property type="entry name" value="DNA ligase"/>
    <property type="match status" value="1"/>
</dbReference>
<dbReference type="FunFam" id="1.10.150.20:FF:000007">
    <property type="entry name" value="DNA ligase"/>
    <property type="match status" value="1"/>
</dbReference>
<dbReference type="FunFam" id="1.10.287.610:FF:000002">
    <property type="entry name" value="DNA ligase"/>
    <property type="match status" value="1"/>
</dbReference>
<dbReference type="FunFam" id="2.40.50.140:FF:000012">
    <property type="entry name" value="DNA ligase"/>
    <property type="match status" value="1"/>
</dbReference>
<dbReference type="FunFam" id="3.30.470.30:FF:000001">
    <property type="entry name" value="DNA ligase"/>
    <property type="match status" value="1"/>
</dbReference>
<dbReference type="FunFam" id="3.40.50.10190:FF:000054">
    <property type="entry name" value="DNA ligase"/>
    <property type="match status" value="1"/>
</dbReference>
<dbReference type="Gene3D" id="6.20.10.30">
    <property type="match status" value="1"/>
</dbReference>
<dbReference type="Gene3D" id="1.10.150.20">
    <property type="entry name" value="5' to 3' exonuclease, C-terminal subdomain"/>
    <property type="match status" value="2"/>
</dbReference>
<dbReference type="Gene3D" id="3.40.50.10190">
    <property type="entry name" value="BRCT domain"/>
    <property type="match status" value="1"/>
</dbReference>
<dbReference type="Gene3D" id="3.30.470.30">
    <property type="entry name" value="DNA ligase/mRNA capping enzyme"/>
    <property type="match status" value="1"/>
</dbReference>
<dbReference type="Gene3D" id="1.10.287.610">
    <property type="entry name" value="Helix hairpin bin"/>
    <property type="match status" value="1"/>
</dbReference>
<dbReference type="Gene3D" id="2.40.50.140">
    <property type="entry name" value="Nucleic acid-binding proteins"/>
    <property type="match status" value="1"/>
</dbReference>
<dbReference type="HAMAP" id="MF_01588">
    <property type="entry name" value="DNA_ligase_A"/>
    <property type="match status" value="1"/>
</dbReference>
<dbReference type="InterPro" id="IPR001357">
    <property type="entry name" value="BRCT_dom"/>
</dbReference>
<dbReference type="InterPro" id="IPR036420">
    <property type="entry name" value="BRCT_dom_sf"/>
</dbReference>
<dbReference type="InterPro" id="IPR041663">
    <property type="entry name" value="DisA/LigA_HHH"/>
</dbReference>
<dbReference type="InterPro" id="IPR001679">
    <property type="entry name" value="DNA_ligase"/>
</dbReference>
<dbReference type="InterPro" id="IPR018239">
    <property type="entry name" value="DNA_ligase_AS"/>
</dbReference>
<dbReference type="InterPro" id="IPR033136">
    <property type="entry name" value="DNA_ligase_CS"/>
</dbReference>
<dbReference type="InterPro" id="IPR013839">
    <property type="entry name" value="DNAligase_adenylation"/>
</dbReference>
<dbReference type="InterPro" id="IPR013840">
    <property type="entry name" value="DNAligase_N"/>
</dbReference>
<dbReference type="InterPro" id="IPR003583">
    <property type="entry name" value="Hlx-hairpin-Hlx_DNA-bd_motif"/>
</dbReference>
<dbReference type="InterPro" id="IPR012340">
    <property type="entry name" value="NA-bd_OB-fold"/>
</dbReference>
<dbReference type="InterPro" id="IPR004150">
    <property type="entry name" value="NAD_DNA_ligase_OB"/>
</dbReference>
<dbReference type="InterPro" id="IPR010994">
    <property type="entry name" value="RuvA_2-like"/>
</dbReference>
<dbReference type="InterPro" id="IPR004149">
    <property type="entry name" value="Znf_DNAligase_C4"/>
</dbReference>
<dbReference type="NCBIfam" id="TIGR00575">
    <property type="entry name" value="dnlj"/>
    <property type="match status" value="1"/>
</dbReference>
<dbReference type="NCBIfam" id="NF005932">
    <property type="entry name" value="PRK07956.1"/>
    <property type="match status" value="1"/>
</dbReference>
<dbReference type="PANTHER" id="PTHR23389">
    <property type="entry name" value="CHROMOSOME TRANSMISSION FIDELITY FACTOR 18"/>
    <property type="match status" value="1"/>
</dbReference>
<dbReference type="PANTHER" id="PTHR23389:SF9">
    <property type="entry name" value="DNA LIGASE"/>
    <property type="match status" value="1"/>
</dbReference>
<dbReference type="Pfam" id="PF00533">
    <property type="entry name" value="BRCT"/>
    <property type="match status" value="1"/>
</dbReference>
<dbReference type="Pfam" id="PF01653">
    <property type="entry name" value="DNA_ligase_aden"/>
    <property type="match status" value="1"/>
</dbReference>
<dbReference type="Pfam" id="PF03120">
    <property type="entry name" value="DNA_ligase_OB"/>
    <property type="match status" value="1"/>
</dbReference>
<dbReference type="Pfam" id="PF03119">
    <property type="entry name" value="DNA_ligase_ZBD"/>
    <property type="match status" value="1"/>
</dbReference>
<dbReference type="Pfam" id="PF12826">
    <property type="entry name" value="HHH_2"/>
    <property type="match status" value="1"/>
</dbReference>
<dbReference type="Pfam" id="PF14520">
    <property type="entry name" value="HHH_5"/>
    <property type="match status" value="1"/>
</dbReference>
<dbReference type="Pfam" id="PF22745">
    <property type="entry name" value="Nlig-Ia"/>
    <property type="match status" value="1"/>
</dbReference>
<dbReference type="PIRSF" id="PIRSF001604">
    <property type="entry name" value="LigA"/>
    <property type="match status" value="1"/>
</dbReference>
<dbReference type="SMART" id="SM00292">
    <property type="entry name" value="BRCT"/>
    <property type="match status" value="1"/>
</dbReference>
<dbReference type="SMART" id="SM00278">
    <property type="entry name" value="HhH1"/>
    <property type="match status" value="4"/>
</dbReference>
<dbReference type="SMART" id="SM00532">
    <property type="entry name" value="LIGANc"/>
    <property type="match status" value="1"/>
</dbReference>
<dbReference type="SUPFAM" id="SSF52113">
    <property type="entry name" value="BRCT domain"/>
    <property type="match status" value="1"/>
</dbReference>
<dbReference type="SUPFAM" id="SSF56091">
    <property type="entry name" value="DNA ligase/mRNA capping enzyme, catalytic domain"/>
    <property type="match status" value="1"/>
</dbReference>
<dbReference type="SUPFAM" id="SSF50249">
    <property type="entry name" value="Nucleic acid-binding proteins"/>
    <property type="match status" value="1"/>
</dbReference>
<dbReference type="SUPFAM" id="SSF47781">
    <property type="entry name" value="RuvA domain 2-like"/>
    <property type="match status" value="1"/>
</dbReference>
<dbReference type="PROSITE" id="PS50172">
    <property type="entry name" value="BRCT"/>
    <property type="match status" value="1"/>
</dbReference>
<dbReference type="PROSITE" id="PS01055">
    <property type="entry name" value="DNA_LIGASE_N1"/>
    <property type="match status" value="1"/>
</dbReference>
<dbReference type="PROSITE" id="PS01056">
    <property type="entry name" value="DNA_LIGASE_N2"/>
    <property type="match status" value="1"/>
</dbReference>
<gene>
    <name evidence="1" type="primary">ligA</name>
    <name type="ordered locus">BTH_I2022</name>
</gene>